<sequence length="1216" mass="134587">MAAMAPGGGGSGSGVNPFLSDSDEDDDEVAATEDRRAGLRLGAGVGLDPGSAGSLSPQDPMALGSSARPGLAVEMSAAPAALGGSGETPARLSIDAIAAQLLRDQYLLTALELHTELLESGRELPRLRDYFSNPGNFERQSGTPPGMGAPGIPGASIVGGAGGREPSTTSGGGQLNRAGSISTLDSLDFARYSDDGNRETDERVAVLEFELRKAKETIQALRANLTKAAEHEVPLQERKNYKSSPEIQEPIKPLEKRALNFLVNEFLLKNNYKLTSITFSDENDDQDFELWDDVGLNIPKPPDLLQLYRDFGNHQVTGKDLVDVASGVDEDELEALTPILGNVPPTLDTPLPIENTLLVQKLEDKISLLNNEKWSLMEQIRRLESEMDILKAEHFATPAVGDSVQPSLVWSSQKDSEDNRQSPAVNSSDQEKTKDVHLEIPDAADSFIPKENSSGSFPRKEREELPPSSVSNKTTLHFDQPNRKLSPAFHQALLSFCRMSADSRLGSEVSRIADSEKSVMLMLGRCLPHIVPNVLLAKREELIPLILCTACLHPEPKERDQLLHILFNLIKRPDDEQRQMILTGCVAFARHVGPTRVEAELLPQCWEQINHKYPERRLLVAESCGALAPYLPKEIRSSLVLSMLQQMLMEDKADLVREAVIKSLGIIMGYIDDPDKYQQGFELLLSALGDPSERVVSATHQVFLPAYAAWTTELGNLQSHLIPTLLNKIEKLLREGEHGLDEHKLHMYLSALQSLIPSLFALVLQNAPFSSKAKLHGEVPHIEVTRFPRPMSPLQDVSTIIGSREQLAVLLQLYDYQLEHEGTTGWESLLWVVNQLLPQLIEIVGKINVTSTACVHEFSRFFWRLCRTFGKIFTNTKVKPQFQEILRLSEENIDSSAGNGVLTKATVPIYATGVLTCYIQEEDRKLLVGFLEDVMTLLSLSHAPLDSLKASFVELGANPAYHELLLTVLWYGVVHTSALVRCTAARMFELLVKGVNETLVAQRVVPALITLSSDPEISVRIATIPAFGTIMETVIQRELLERVKMQLASFLEDPQYQDQHSLHTEVIRTFGRVGPNAEPRFRDEFVIPHLHKLALVNNLQIVDSKKLDIATHLFEAYSALSCCFISEDLMVNHFLPGLRCLRTDMEHLSPEHEVILSSMIKECEQKVENKTVQEPPGSMSIAASLVSEDTKTKFLNKMGQLTTSGAMLANVFQRKK</sequence>
<dbReference type="EMBL" id="AK129368">
    <property type="protein sequence ID" value="BAC98178.1"/>
    <property type="status" value="ALT_SEQ"/>
    <property type="molecule type" value="Transcribed_RNA"/>
</dbReference>
<dbReference type="EMBL" id="AK031484">
    <property type="protein sequence ID" value="BAC27422.1"/>
    <property type="molecule type" value="mRNA"/>
</dbReference>
<dbReference type="EMBL" id="AK032147">
    <property type="protein sequence ID" value="BAC27723.1"/>
    <property type="molecule type" value="mRNA"/>
</dbReference>
<dbReference type="EMBL" id="AK040168">
    <property type="protein sequence ID" value="BAC30530.1"/>
    <property type="status" value="ALT_INIT"/>
    <property type="molecule type" value="mRNA"/>
</dbReference>
<dbReference type="EMBL" id="BC060194">
    <property type="protein sequence ID" value="AAH60194.1"/>
    <property type="molecule type" value="mRNA"/>
</dbReference>
<dbReference type="EMBL" id="BC117949">
    <property type="protein sequence ID" value="AAI17950.1"/>
    <property type="molecule type" value="mRNA"/>
</dbReference>
<dbReference type="EMBL" id="BC117950">
    <property type="protein sequence ID" value="AAI17951.1"/>
    <property type="molecule type" value="mRNA"/>
</dbReference>
<dbReference type="CCDS" id="CCDS15206.1">
    <molecule id="Q148V7-1"/>
</dbReference>
<dbReference type="CCDS" id="CCDS48334.1">
    <molecule id="Q148V7-2"/>
</dbReference>
<dbReference type="RefSeq" id="NP_083625.1">
    <property type="nucleotide sequence ID" value="NM_029349.1"/>
</dbReference>
<dbReference type="RefSeq" id="NP_775279.2">
    <property type="nucleotide sequence ID" value="NM_173187.3"/>
</dbReference>
<dbReference type="BioGRID" id="230627">
    <property type="interactions" value="6"/>
</dbReference>
<dbReference type="FunCoup" id="Q148V7">
    <property type="interactions" value="2106"/>
</dbReference>
<dbReference type="IntAct" id="Q148V7">
    <property type="interactions" value="1"/>
</dbReference>
<dbReference type="STRING" id="10090.ENSMUSP00000039178"/>
<dbReference type="GlyConnect" id="2482">
    <property type="glycosylation" value="1 N-Linked glycan (1 site)"/>
</dbReference>
<dbReference type="GlyCosmos" id="Q148V7">
    <property type="glycosylation" value="1 site, 1 glycan"/>
</dbReference>
<dbReference type="GlyGen" id="Q148V7">
    <property type="glycosylation" value="5 sites, 2 N-linked glycans (2 sites), 1 O-linked glycan (3 sites)"/>
</dbReference>
<dbReference type="iPTMnet" id="Q148V7"/>
<dbReference type="PhosphoSitePlus" id="Q148V7"/>
<dbReference type="SwissPalm" id="Q148V7"/>
<dbReference type="jPOST" id="Q148V7"/>
<dbReference type="PaxDb" id="10090-ENSMUSP00000039178"/>
<dbReference type="PeptideAtlas" id="Q148V7"/>
<dbReference type="ProteomicsDB" id="269128">
    <molecule id="Q148V7-1"/>
</dbReference>
<dbReference type="ProteomicsDB" id="269129">
    <molecule id="Q148V7-2"/>
</dbReference>
<dbReference type="ProteomicsDB" id="269130">
    <molecule id="Q148V7-3"/>
</dbReference>
<dbReference type="Pumba" id="Q148V7"/>
<dbReference type="DNASU" id="227446"/>
<dbReference type="GeneID" id="227446"/>
<dbReference type="KEGG" id="mmu:227446"/>
<dbReference type="AGR" id="MGI:1922832"/>
<dbReference type="CTD" id="57614"/>
<dbReference type="MGI" id="MGI:1922832">
    <property type="gene designation" value="Relch"/>
</dbReference>
<dbReference type="eggNOG" id="KOG0211">
    <property type="taxonomic scope" value="Eukaryota"/>
</dbReference>
<dbReference type="InParanoid" id="Q148V7"/>
<dbReference type="PhylomeDB" id="Q148V7"/>
<dbReference type="BioGRID-ORCS" id="227446">
    <property type="hits" value="1 hit in 77 CRISPR screens"/>
</dbReference>
<dbReference type="ChiTaRS" id="Relch">
    <property type="organism name" value="mouse"/>
</dbReference>
<dbReference type="PRO" id="PR:Q148V7"/>
<dbReference type="Proteomes" id="UP000000589">
    <property type="component" value="Unplaced"/>
</dbReference>
<dbReference type="RNAct" id="Q148V7">
    <property type="molecule type" value="protein"/>
</dbReference>
<dbReference type="GO" id="GO:0055037">
    <property type="term" value="C:recycling endosome"/>
    <property type="evidence" value="ECO:0000314"/>
    <property type="project" value="UniProtKB"/>
</dbReference>
<dbReference type="GO" id="GO:0005802">
    <property type="term" value="C:trans-Golgi network"/>
    <property type="evidence" value="ECO:0000250"/>
    <property type="project" value="UniProtKB"/>
</dbReference>
<dbReference type="GO" id="GO:0032367">
    <property type="term" value="P:intracellular cholesterol transport"/>
    <property type="evidence" value="ECO:0000250"/>
    <property type="project" value="UniProtKB"/>
</dbReference>
<dbReference type="FunFam" id="1.25.10.10:FF:000080">
    <property type="entry name" value="lisH domain and HEAT repeat-containing protein KIAA1468 homolog"/>
    <property type="match status" value="1"/>
</dbReference>
<dbReference type="FunFam" id="1.25.10.10:FF:000218">
    <property type="entry name" value="lisH domain and HEAT repeat-containing protein KIAA1468 homolog isoform X1"/>
    <property type="match status" value="1"/>
</dbReference>
<dbReference type="Gene3D" id="1.25.10.10">
    <property type="entry name" value="Leucine-rich Repeat Variant"/>
    <property type="match status" value="2"/>
</dbReference>
<dbReference type="InterPro" id="IPR011989">
    <property type="entry name" value="ARM-like"/>
</dbReference>
<dbReference type="InterPro" id="IPR016024">
    <property type="entry name" value="ARM-type_fold"/>
</dbReference>
<dbReference type="InterPro" id="IPR021133">
    <property type="entry name" value="HEAT_type_2"/>
</dbReference>
<dbReference type="InterPro" id="IPR006594">
    <property type="entry name" value="LisH"/>
</dbReference>
<dbReference type="InterPro" id="IPR040362">
    <property type="entry name" value="RELCH"/>
</dbReference>
<dbReference type="PANTHER" id="PTHR32059">
    <property type="entry name" value="RAB11-BINDING PROTEIN RELCH"/>
    <property type="match status" value="1"/>
</dbReference>
<dbReference type="PANTHER" id="PTHR32059:SF0">
    <property type="entry name" value="RAB11-BINDING PROTEIN RELCH"/>
    <property type="match status" value="1"/>
</dbReference>
<dbReference type="SMART" id="SM00667">
    <property type="entry name" value="LisH"/>
    <property type="match status" value="1"/>
</dbReference>
<dbReference type="SUPFAM" id="SSF48371">
    <property type="entry name" value="ARM repeat"/>
    <property type="match status" value="1"/>
</dbReference>
<dbReference type="PROSITE" id="PS50077">
    <property type="entry name" value="HEAT_REPEAT"/>
    <property type="match status" value="1"/>
</dbReference>
<dbReference type="PROSITE" id="PS50896">
    <property type="entry name" value="LISH"/>
    <property type="match status" value="1"/>
</dbReference>
<reference key="1">
    <citation type="journal article" date="2003" name="DNA Res.">
        <title>Prediction of the coding sequences of mouse homologues of KIAA gene: III. The complete nucleotide sequences of 500 mouse KIAA-homologous cDNAs identified by screening of terminal sequences of cDNA clones randomly sampled from size-fractionated libraries.</title>
        <authorList>
            <person name="Okazaki N."/>
            <person name="Kikuno R."/>
            <person name="Ohara R."/>
            <person name="Inamoto S."/>
            <person name="Koseki H."/>
            <person name="Hiraoka S."/>
            <person name="Saga Y."/>
            <person name="Nagase T."/>
            <person name="Ohara O."/>
            <person name="Koga H."/>
        </authorList>
    </citation>
    <scope>NUCLEOTIDE SEQUENCE [LARGE SCALE MRNA] (ISOFORM 2)</scope>
    <source>
        <tissue>Brain</tissue>
    </source>
</reference>
<reference key="2">
    <citation type="journal article" date="2005" name="Science">
        <title>The transcriptional landscape of the mammalian genome.</title>
        <authorList>
            <person name="Carninci P."/>
            <person name="Kasukawa T."/>
            <person name="Katayama S."/>
            <person name="Gough J."/>
            <person name="Frith M.C."/>
            <person name="Maeda N."/>
            <person name="Oyama R."/>
            <person name="Ravasi T."/>
            <person name="Lenhard B."/>
            <person name="Wells C."/>
            <person name="Kodzius R."/>
            <person name="Shimokawa K."/>
            <person name="Bajic V.B."/>
            <person name="Brenner S.E."/>
            <person name="Batalov S."/>
            <person name="Forrest A.R."/>
            <person name="Zavolan M."/>
            <person name="Davis M.J."/>
            <person name="Wilming L.G."/>
            <person name="Aidinis V."/>
            <person name="Allen J.E."/>
            <person name="Ambesi-Impiombato A."/>
            <person name="Apweiler R."/>
            <person name="Aturaliya R.N."/>
            <person name="Bailey T.L."/>
            <person name="Bansal M."/>
            <person name="Baxter L."/>
            <person name="Beisel K.W."/>
            <person name="Bersano T."/>
            <person name="Bono H."/>
            <person name="Chalk A.M."/>
            <person name="Chiu K.P."/>
            <person name="Choudhary V."/>
            <person name="Christoffels A."/>
            <person name="Clutterbuck D.R."/>
            <person name="Crowe M.L."/>
            <person name="Dalla E."/>
            <person name="Dalrymple B.P."/>
            <person name="de Bono B."/>
            <person name="Della Gatta G."/>
            <person name="di Bernardo D."/>
            <person name="Down T."/>
            <person name="Engstrom P."/>
            <person name="Fagiolini M."/>
            <person name="Faulkner G."/>
            <person name="Fletcher C.F."/>
            <person name="Fukushima T."/>
            <person name="Furuno M."/>
            <person name="Futaki S."/>
            <person name="Gariboldi M."/>
            <person name="Georgii-Hemming P."/>
            <person name="Gingeras T.R."/>
            <person name="Gojobori T."/>
            <person name="Green R.E."/>
            <person name="Gustincich S."/>
            <person name="Harbers M."/>
            <person name="Hayashi Y."/>
            <person name="Hensch T.K."/>
            <person name="Hirokawa N."/>
            <person name="Hill D."/>
            <person name="Huminiecki L."/>
            <person name="Iacono M."/>
            <person name="Ikeo K."/>
            <person name="Iwama A."/>
            <person name="Ishikawa T."/>
            <person name="Jakt M."/>
            <person name="Kanapin A."/>
            <person name="Katoh M."/>
            <person name="Kawasawa Y."/>
            <person name="Kelso J."/>
            <person name="Kitamura H."/>
            <person name="Kitano H."/>
            <person name="Kollias G."/>
            <person name="Krishnan S.P."/>
            <person name="Kruger A."/>
            <person name="Kummerfeld S.K."/>
            <person name="Kurochkin I.V."/>
            <person name="Lareau L.F."/>
            <person name="Lazarevic D."/>
            <person name="Lipovich L."/>
            <person name="Liu J."/>
            <person name="Liuni S."/>
            <person name="McWilliam S."/>
            <person name="Madan Babu M."/>
            <person name="Madera M."/>
            <person name="Marchionni L."/>
            <person name="Matsuda H."/>
            <person name="Matsuzawa S."/>
            <person name="Miki H."/>
            <person name="Mignone F."/>
            <person name="Miyake S."/>
            <person name="Morris K."/>
            <person name="Mottagui-Tabar S."/>
            <person name="Mulder N."/>
            <person name="Nakano N."/>
            <person name="Nakauchi H."/>
            <person name="Ng P."/>
            <person name="Nilsson R."/>
            <person name="Nishiguchi S."/>
            <person name="Nishikawa S."/>
            <person name="Nori F."/>
            <person name="Ohara O."/>
            <person name="Okazaki Y."/>
            <person name="Orlando V."/>
            <person name="Pang K.C."/>
            <person name="Pavan W.J."/>
            <person name="Pavesi G."/>
            <person name="Pesole G."/>
            <person name="Petrovsky N."/>
            <person name="Piazza S."/>
            <person name="Reed J."/>
            <person name="Reid J.F."/>
            <person name="Ring B.Z."/>
            <person name="Ringwald M."/>
            <person name="Rost B."/>
            <person name="Ruan Y."/>
            <person name="Salzberg S.L."/>
            <person name="Sandelin A."/>
            <person name="Schneider C."/>
            <person name="Schoenbach C."/>
            <person name="Sekiguchi K."/>
            <person name="Semple C.A."/>
            <person name="Seno S."/>
            <person name="Sessa L."/>
            <person name="Sheng Y."/>
            <person name="Shibata Y."/>
            <person name="Shimada H."/>
            <person name="Shimada K."/>
            <person name="Silva D."/>
            <person name="Sinclair B."/>
            <person name="Sperling S."/>
            <person name="Stupka E."/>
            <person name="Sugiura K."/>
            <person name="Sultana R."/>
            <person name="Takenaka Y."/>
            <person name="Taki K."/>
            <person name="Tammoja K."/>
            <person name="Tan S.L."/>
            <person name="Tang S."/>
            <person name="Taylor M.S."/>
            <person name="Tegner J."/>
            <person name="Teichmann S.A."/>
            <person name="Ueda H.R."/>
            <person name="van Nimwegen E."/>
            <person name="Verardo R."/>
            <person name="Wei C.L."/>
            <person name="Yagi K."/>
            <person name="Yamanishi H."/>
            <person name="Zabarovsky E."/>
            <person name="Zhu S."/>
            <person name="Zimmer A."/>
            <person name="Hide W."/>
            <person name="Bult C."/>
            <person name="Grimmond S.M."/>
            <person name="Teasdale R.D."/>
            <person name="Liu E.T."/>
            <person name="Brusic V."/>
            <person name="Quackenbush J."/>
            <person name="Wahlestedt C."/>
            <person name="Mattick J.S."/>
            <person name="Hume D.A."/>
            <person name="Kai C."/>
            <person name="Sasaki D."/>
            <person name="Tomaru Y."/>
            <person name="Fukuda S."/>
            <person name="Kanamori-Katayama M."/>
            <person name="Suzuki M."/>
            <person name="Aoki J."/>
            <person name="Arakawa T."/>
            <person name="Iida J."/>
            <person name="Imamura K."/>
            <person name="Itoh M."/>
            <person name="Kato T."/>
            <person name="Kawaji H."/>
            <person name="Kawagashira N."/>
            <person name="Kawashima T."/>
            <person name="Kojima M."/>
            <person name="Kondo S."/>
            <person name="Konno H."/>
            <person name="Nakano K."/>
            <person name="Ninomiya N."/>
            <person name="Nishio T."/>
            <person name="Okada M."/>
            <person name="Plessy C."/>
            <person name="Shibata K."/>
            <person name="Shiraki T."/>
            <person name="Suzuki S."/>
            <person name="Tagami M."/>
            <person name="Waki K."/>
            <person name="Watahiki A."/>
            <person name="Okamura-Oho Y."/>
            <person name="Suzuki H."/>
            <person name="Kawai J."/>
            <person name="Hayashizaki Y."/>
        </authorList>
    </citation>
    <scope>NUCLEOTIDE SEQUENCE [LARGE SCALE MRNA] (ISOFORM 1)</scope>
    <scope>NUCLEOTIDE SEQUENCE [LARGE SCALE MRNA] OF 8-1216 (ISOFORM 3)</scope>
    <source>
        <strain>C57BL/6J</strain>
        <tissue>Olfactory bulb</tissue>
        <tissue>Testis</tissue>
        <tissue>Thymus</tissue>
    </source>
</reference>
<reference key="3">
    <citation type="journal article" date="2004" name="Genome Res.">
        <title>The status, quality, and expansion of the NIH full-length cDNA project: the Mammalian Gene Collection (MGC).</title>
        <authorList>
            <consortium name="The MGC Project Team"/>
        </authorList>
    </citation>
    <scope>NUCLEOTIDE SEQUENCE [LARGE SCALE MRNA] (ISOFORMS 1 AND 2)</scope>
    <source>
        <strain>C57BL/6J</strain>
        <tissue>Brain</tissue>
    </source>
</reference>
<reference key="4">
    <citation type="journal article" date="2007" name="Proc. Natl. Acad. Sci. U.S.A.">
        <title>Large-scale phosphorylation analysis of mouse liver.</title>
        <authorList>
            <person name="Villen J."/>
            <person name="Beausoleil S.A."/>
            <person name="Gerber S.A."/>
            <person name="Gygi S.P."/>
        </authorList>
    </citation>
    <scope>ACETYLATION [LARGE SCALE ANALYSIS] AT ALA-2</scope>
    <scope>PHOSPHORYLATION [LARGE SCALE ANALYSIS] AT SER-20; SER-22; THR-32 AND SER-180</scope>
    <scope>CLEAVAGE OF INITIATOR METHIONINE [LARGE SCALE ANALYSIS]</scope>
    <scope>IDENTIFICATION BY MASS SPECTROMETRY [LARGE SCALE ANALYSIS]</scope>
    <source>
        <tissue>Liver</tissue>
    </source>
</reference>
<reference key="5">
    <citation type="journal article" date="2010" name="Cell">
        <title>A tissue-specific atlas of mouse protein phosphorylation and expression.</title>
        <authorList>
            <person name="Huttlin E.L."/>
            <person name="Jedrychowski M.P."/>
            <person name="Elias J.E."/>
            <person name="Goswami T."/>
            <person name="Rad R."/>
            <person name="Beausoleil S.A."/>
            <person name="Villen J."/>
            <person name="Haas W."/>
            <person name="Sowa M.E."/>
            <person name="Gygi S.P."/>
        </authorList>
    </citation>
    <scope>PHOSPHORYLATION [LARGE SCALE ANALYSIS] AT SER-180; THR-183; SER-186; SER-385; SER-792 AND SER-1149</scope>
    <scope>IDENTIFICATION BY MASS SPECTROMETRY [LARGE SCALE ANALYSIS]</scope>
    <source>
        <tissue>Brain</tissue>
        <tissue>Brown adipose tissue</tissue>
        <tissue>Heart</tissue>
        <tissue>Kidney</tissue>
        <tissue>Liver</tissue>
        <tissue>Lung</tissue>
        <tissue>Pancreas</tissue>
        <tissue>Spleen</tissue>
        <tissue>Testis</tissue>
    </source>
</reference>
<reference key="6">
    <citation type="journal article" date="2018" name="J. Cell Biol.">
        <title>The Rab11-binding protein RELCH/KIAA1468 controls intracellular cholesterol distribution.</title>
        <authorList>
            <person name="Sobajima T."/>
            <person name="Yoshimura S.I."/>
            <person name="Maeda T."/>
            <person name="Miyata H."/>
            <person name="Miyoshi E."/>
            <person name="Harada A."/>
        </authorList>
    </citation>
    <scope>INTERACTION WITH RAB11A; RAB11B AND OSBP</scope>
    <scope>IDENTIFICATION BY MASS SPECTROMETRY</scope>
    <scope>SUBCELLULAR LOCATION</scope>
    <scope>IDENTIFICATION IN A COMPLEX WITH RAB11A AND OSBP</scope>
</reference>
<comment type="function">
    <text evidence="1">Regulates intracellular cholesterol distribution from recycling endosomes to the trans-Golgi network through interactions with RAB11 and OSBP. Functions in membrane tethering and promotes OSBP-mediated cholesterol transfer between RAB11-bound recycling endosomes and OSBP-bound Golgi-like membranes.</text>
</comment>
<comment type="subunit">
    <text evidence="6">Interacts with RAB11A (VIA-GTP form) (PubMed:29514919). Interacts with RAB11B (PubMed:29514919). Interacts (via the third HEAT repeat) with OSBP (via C-terminus) (PubMed:29514919). Found in a complex composed of RELCH, OSBP1 and RAB11A (PubMed:29514919).</text>
</comment>
<comment type="subcellular location">
    <subcellularLocation>
        <location evidence="6">Recycling endosome</location>
    </subcellularLocation>
    <subcellularLocation>
        <location evidence="1">Golgi apparatus</location>
        <location evidence="1">trans-Golgi network</location>
    </subcellularLocation>
    <text evidence="1 6">Colocalization with RAB11A in recycling endosomes (PubMed:29514919). Translocated to the trans-Golgi network area in an OSBP-dependent manner (By similarity).</text>
</comment>
<comment type="alternative products">
    <event type="alternative splicing"/>
    <isoform>
        <id>Q148V7-1</id>
        <name>1</name>
        <sequence type="displayed"/>
    </isoform>
    <isoform>
        <id>Q148V7-2</id>
        <name>2</name>
        <sequence type="described" ref="VSP_030019"/>
    </isoform>
    <isoform>
        <id>Q148V7-3</id>
        <name>3</name>
        <sequence type="described" ref="VSP_030018 VSP_030020 VSP_030021"/>
    </isoform>
</comment>
<comment type="sequence caution" evidence="11">
    <conflict type="erroneous initiation">
        <sequence resource="EMBL-CDS" id="BAC30530"/>
    </conflict>
</comment>
<comment type="sequence caution" evidence="11">
    <conflict type="miscellaneous discrepancy">
        <sequence resource="EMBL-CDS" id="BAC98178"/>
    </conflict>
    <text>The sequence differs from that shown because it is derived from pre-RNA.</text>
</comment>
<organism>
    <name type="scientific">Mus musculus</name>
    <name type="common">Mouse</name>
    <dbReference type="NCBI Taxonomy" id="10090"/>
    <lineage>
        <taxon>Eukaryota</taxon>
        <taxon>Metazoa</taxon>
        <taxon>Chordata</taxon>
        <taxon>Craniata</taxon>
        <taxon>Vertebrata</taxon>
        <taxon>Euteleostomi</taxon>
        <taxon>Mammalia</taxon>
        <taxon>Eutheria</taxon>
        <taxon>Euarchontoglires</taxon>
        <taxon>Glires</taxon>
        <taxon>Rodentia</taxon>
        <taxon>Myomorpha</taxon>
        <taxon>Muroidea</taxon>
        <taxon>Muridae</taxon>
        <taxon>Murinae</taxon>
        <taxon>Mus</taxon>
        <taxon>Mus</taxon>
    </lineage>
</organism>
<name>RELCH_MOUSE</name>
<gene>
    <name type="primary">Relch</name>
    <name type="synonym">Kiaa1468</name>
</gene>
<keyword id="KW-0007">Acetylation</keyword>
<keyword id="KW-0025">Alternative splicing</keyword>
<keyword id="KW-0175">Coiled coil</keyword>
<keyword id="KW-0967">Endosome</keyword>
<keyword id="KW-0333">Golgi apparatus</keyword>
<keyword id="KW-0445">Lipid transport</keyword>
<keyword id="KW-0597">Phosphoprotein</keyword>
<keyword id="KW-1185">Reference proteome</keyword>
<keyword id="KW-0677">Repeat</keyword>
<keyword id="KW-0813">Transport</keyword>
<proteinExistence type="evidence at protein level"/>
<accession>Q148V7</accession>
<accession>Q148V6</accession>
<accession>Q6PAN5</accession>
<accession>Q6ZPQ2</accession>
<accession>Q8C9Z0</accession>
<accession>Q8CCT3</accession>
<accession>Q8CD48</accession>
<feature type="initiator methionine" description="Removed" evidence="12">
    <location>
        <position position="1"/>
    </location>
</feature>
<feature type="chain" id="PRO_0000313094" description="RAB11-binding protein RELCH">
    <location>
        <begin position="2"/>
        <end position="1216"/>
    </location>
</feature>
<feature type="domain" description="LisH" evidence="4">
    <location>
        <begin position="255"/>
        <end position="287"/>
    </location>
</feature>
<feature type="repeat" description="HEAT 1" evidence="11">
    <location>
        <begin position="601"/>
        <end position="639"/>
    </location>
</feature>
<feature type="repeat" description="HEAT 2" evidence="11">
    <location>
        <begin position="640"/>
        <end position="679"/>
    </location>
</feature>
<feature type="repeat" description="HEAT 3" evidence="3">
    <location>
        <begin position="1004"/>
        <end position="1042"/>
    </location>
</feature>
<feature type="region of interest" description="Disordered" evidence="5">
    <location>
        <begin position="1"/>
        <end position="67"/>
    </location>
</feature>
<feature type="region of interest" description="Disordered" evidence="5">
    <location>
        <begin position="133"/>
        <end position="179"/>
    </location>
</feature>
<feature type="region of interest" description="Disordered" evidence="5">
    <location>
        <begin position="409"/>
        <end position="473"/>
    </location>
</feature>
<feature type="region of interest" description="Interaction with RAB11A and RAB11B" evidence="6">
    <location>
        <begin position="497"/>
        <end position="779"/>
    </location>
</feature>
<feature type="coiled-coil region" evidence="2">
    <location>
        <begin position="197"/>
        <end position="231"/>
    </location>
</feature>
<feature type="coiled-coil region" evidence="2">
    <location>
        <begin position="358"/>
        <end position="397"/>
    </location>
</feature>
<feature type="compositionally biased region" description="Gly residues" evidence="5">
    <location>
        <begin position="1"/>
        <end position="13"/>
    </location>
</feature>
<feature type="compositionally biased region" description="Acidic residues" evidence="5">
    <location>
        <begin position="21"/>
        <end position="31"/>
    </location>
</feature>
<feature type="compositionally biased region" description="Low complexity" evidence="5">
    <location>
        <begin position="142"/>
        <end position="154"/>
    </location>
</feature>
<feature type="compositionally biased region" description="Basic and acidic residues" evidence="5">
    <location>
        <begin position="429"/>
        <end position="440"/>
    </location>
</feature>
<feature type="modified residue" description="N-acetylalanine" evidence="12">
    <location>
        <position position="2"/>
    </location>
</feature>
<feature type="modified residue" description="Phosphoserine" evidence="12">
    <location>
        <position position="20"/>
    </location>
</feature>
<feature type="modified residue" description="Phosphoserine" evidence="12">
    <location>
        <position position="22"/>
    </location>
</feature>
<feature type="modified residue" description="Phosphothreonine" evidence="12">
    <location>
        <position position="32"/>
    </location>
</feature>
<feature type="modified residue" description="Phosphoserine" evidence="1">
    <location>
        <position position="54"/>
    </location>
</feature>
<feature type="modified residue" description="Phosphoserine" evidence="1">
    <location>
        <position position="56"/>
    </location>
</feature>
<feature type="modified residue" description="Phosphoserine" evidence="12 13">
    <location>
        <position position="180"/>
    </location>
</feature>
<feature type="modified residue" description="Phosphoserine" evidence="1">
    <location>
        <position position="182"/>
    </location>
</feature>
<feature type="modified residue" description="Phosphothreonine" evidence="13">
    <location>
        <position position="183"/>
    </location>
</feature>
<feature type="modified residue" description="Phosphoserine" evidence="13">
    <location>
        <position position="186"/>
    </location>
</feature>
<feature type="modified residue" description="Phosphoserine" evidence="13">
    <location>
        <position position="385"/>
    </location>
</feature>
<feature type="modified residue" description="Phosphoserine" evidence="1">
    <location>
        <position position="453"/>
    </location>
</feature>
<feature type="modified residue" description="Phosphoserine" evidence="13">
    <location>
        <position position="792"/>
    </location>
</feature>
<feature type="modified residue" description="Phosphoserine" evidence="13">
    <location>
        <position position="1149"/>
    </location>
</feature>
<feature type="splice variant" id="VSP_030018" description="In isoform 3." evidence="9">
    <location>
        <begin position="78"/>
        <end position="109"/>
    </location>
</feature>
<feature type="splice variant" id="VSP_030019" description="In isoform 2." evidence="7 8">
    <location>
        <begin position="205"/>
        <end position="228"/>
    </location>
</feature>
<feature type="splice variant" id="VSP_030020" description="In isoform 3." evidence="9">
    <original>LLVKGVNETLV</original>
    <variation>VGYIILSCFYL</variation>
    <location>
        <begin position="990"/>
        <end position="1000"/>
    </location>
</feature>
<feature type="splice variant" id="VSP_030021" description="In isoform 3." evidence="9">
    <location>
        <begin position="1001"/>
        <end position="1216"/>
    </location>
</feature>
<feature type="sequence conflict" description="In Ref. 2; BAC27422." evidence="11" ref="2">
    <original>L</original>
    <variation>P</variation>
    <location>
        <position position="82"/>
    </location>
</feature>
<feature type="sequence conflict" description="In Ref. 2; BAC27422." evidence="11" ref="2">
    <original>E</original>
    <variation>K</variation>
    <location>
        <position position="431"/>
    </location>
</feature>
<feature type="sequence conflict" description="In Ref. 2; BAC27422." evidence="11" ref="2">
    <original>T</original>
    <variation>A</variation>
    <location>
        <position position="1202"/>
    </location>
</feature>
<protein>
    <recommendedName>
        <fullName evidence="11">RAB11-binding protein RELCH</fullName>
    </recommendedName>
    <alternativeName>
        <fullName>LisH domain and HEAT repeat-containing protein KIAA1468</fullName>
    </alternativeName>
    <alternativeName>
        <fullName evidence="10">RAB11-binding protein containing LisH, coiled-coil, and HEAT repeats</fullName>
    </alternativeName>
</protein>
<evidence type="ECO:0000250" key="1">
    <source>
        <dbReference type="UniProtKB" id="Q9P260"/>
    </source>
</evidence>
<evidence type="ECO:0000255" key="2"/>
<evidence type="ECO:0000255" key="3">
    <source>
        <dbReference type="PROSITE-ProRule" id="PRU00103"/>
    </source>
</evidence>
<evidence type="ECO:0000255" key="4">
    <source>
        <dbReference type="PROSITE-ProRule" id="PRU00126"/>
    </source>
</evidence>
<evidence type="ECO:0000256" key="5">
    <source>
        <dbReference type="SAM" id="MobiDB-lite"/>
    </source>
</evidence>
<evidence type="ECO:0000269" key="6">
    <source>
    </source>
</evidence>
<evidence type="ECO:0000303" key="7">
    <source>
    </source>
</evidence>
<evidence type="ECO:0000303" key="8">
    <source>
    </source>
</evidence>
<evidence type="ECO:0000303" key="9">
    <source>
    </source>
</evidence>
<evidence type="ECO:0000303" key="10">
    <source>
    </source>
</evidence>
<evidence type="ECO:0000305" key="11"/>
<evidence type="ECO:0007744" key="12">
    <source>
    </source>
</evidence>
<evidence type="ECO:0007744" key="13">
    <source>
    </source>
</evidence>